<accession>A5ID16</accession>
<reference key="1">
    <citation type="submission" date="2006-11" db="EMBL/GenBank/DDBJ databases">
        <title>Identification and characterization of a new conjugation/ type IVA secretion system (trb/tra) of L. pneumophila Corby localized on a mobile genomic island.</title>
        <authorList>
            <person name="Gloeckner G."/>
            <person name="Albert-Weissenberger C."/>
            <person name="Weinmann E."/>
            <person name="Jacobi S."/>
            <person name="Schunder E."/>
            <person name="Steinert M."/>
            <person name="Buchrieser C."/>
            <person name="Hacker J."/>
            <person name="Heuner K."/>
        </authorList>
    </citation>
    <scope>NUCLEOTIDE SEQUENCE [LARGE SCALE GENOMIC DNA]</scope>
    <source>
        <strain>Corby</strain>
    </source>
</reference>
<sequence length="424" mass="46641">MSKSGNGNGDKVLYCSFCGKSQHEVKKLIAGPSVFVCDECVELCNDIIREETHETHEETEARLPTPKEISNFLDEYVIGQQHAKKVLSVAVYNHYKRLQHKSEDGVELGKSNILLIGPTGSGKTLLAQTLARILNVPFAMADATTLTEAGYVGEDVENIIQKLLQKCDYDVDKAQQGIVYIDEIDKISRKSDNPSITRDVSGEGVQQALLKLIEGTVASVPPQGGRKHPQQEFLQVDTSNILFICGGAFAGLDKVIRERSDKSSIGFSAQLKSKKSSNDEVSKVLGQLESDDLIKYGLIPEFVGRLPVVTTLQELDEAALIDILTRPKNALTKQFQSLFKMEGSELEFRDEALIAIAKKALERKMGARGLRSILENILLDTMYDLPSLEGVNKVVIDESVVNGLSKPILIYEQDEKKSASGSKD</sequence>
<feature type="chain" id="PRO_1000024574" description="ATP-dependent Clp protease ATP-binding subunit ClpX">
    <location>
        <begin position="1"/>
        <end position="424"/>
    </location>
</feature>
<feature type="domain" description="ClpX-type ZB" evidence="2">
    <location>
        <begin position="1"/>
        <end position="56"/>
    </location>
</feature>
<feature type="binding site" evidence="2">
    <location>
        <position position="15"/>
    </location>
    <ligand>
        <name>Zn(2+)</name>
        <dbReference type="ChEBI" id="CHEBI:29105"/>
    </ligand>
</feature>
<feature type="binding site" evidence="2">
    <location>
        <position position="18"/>
    </location>
    <ligand>
        <name>Zn(2+)</name>
        <dbReference type="ChEBI" id="CHEBI:29105"/>
    </ligand>
</feature>
<feature type="binding site" evidence="2">
    <location>
        <position position="37"/>
    </location>
    <ligand>
        <name>Zn(2+)</name>
        <dbReference type="ChEBI" id="CHEBI:29105"/>
    </ligand>
</feature>
<feature type="binding site" evidence="2">
    <location>
        <position position="40"/>
    </location>
    <ligand>
        <name>Zn(2+)</name>
        <dbReference type="ChEBI" id="CHEBI:29105"/>
    </ligand>
</feature>
<feature type="binding site" evidence="1">
    <location>
        <begin position="118"/>
        <end position="125"/>
    </location>
    <ligand>
        <name>ATP</name>
        <dbReference type="ChEBI" id="CHEBI:30616"/>
    </ligand>
</feature>
<organism>
    <name type="scientific">Legionella pneumophila (strain Corby)</name>
    <dbReference type="NCBI Taxonomy" id="400673"/>
    <lineage>
        <taxon>Bacteria</taxon>
        <taxon>Pseudomonadati</taxon>
        <taxon>Pseudomonadota</taxon>
        <taxon>Gammaproteobacteria</taxon>
        <taxon>Legionellales</taxon>
        <taxon>Legionellaceae</taxon>
        <taxon>Legionella</taxon>
    </lineage>
</organism>
<gene>
    <name evidence="1" type="primary">clpX</name>
    <name type="ordered locus">LPC_1305</name>
</gene>
<protein>
    <recommendedName>
        <fullName evidence="1">ATP-dependent Clp protease ATP-binding subunit ClpX</fullName>
    </recommendedName>
</protein>
<evidence type="ECO:0000255" key="1">
    <source>
        <dbReference type="HAMAP-Rule" id="MF_00175"/>
    </source>
</evidence>
<evidence type="ECO:0000255" key="2">
    <source>
        <dbReference type="PROSITE-ProRule" id="PRU01250"/>
    </source>
</evidence>
<dbReference type="EMBL" id="CP000675">
    <property type="protein sequence ID" value="ABQ55266.1"/>
    <property type="molecule type" value="Genomic_DNA"/>
</dbReference>
<dbReference type="RefSeq" id="WP_011215825.1">
    <property type="nucleotide sequence ID" value="NZ_JAPMSS010000005.1"/>
</dbReference>
<dbReference type="SMR" id="A5ID16"/>
<dbReference type="KEGG" id="lpc:LPC_1305"/>
<dbReference type="HOGENOM" id="CLU_014218_8_2_6"/>
<dbReference type="GO" id="GO:0009376">
    <property type="term" value="C:HslUV protease complex"/>
    <property type="evidence" value="ECO:0007669"/>
    <property type="project" value="TreeGrafter"/>
</dbReference>
<dbReference type="GO" id="GO:0005524">
    <property type="term" value="F:ATP binding"/>
    <property type="evidence" value="ECO:0007669"/>
    <property type="project" value="UniProtKB-UniRule"/>
</dbReference>
<dbReference type="GO" id="GO:0016887">
    <property type="term" value="F:ATP hydrolysis activity"/>
    <property type="evidence" value="ECO:0007669"/>
    <property type="project" value="InterPro"/>
</dbReference>
<dbReference type="GO" id="GO:0140662">
    <property type="term" value="F:ATP-dependent protein folding chaperone"/>
    <property type="evidence" value="ECO:0007669"/>
    <property type="project" value="InterPro"/>
</dbReference>
<dbReference type="GO" id="GO:0046983">
    <property type="term" value="F:protein dimerization activity"/>
    <property type="evidence" value="ECO:0007669"/>
    <property type="project" value="InterPro"/>
</dbReference>
<dbReference type="GO" id="GO:0051082">
    <property type="term" value="F:unfolded protein binding"/>
    <property type="evidence" value="ECO:0007669"/>
    <property type="project" value="UniProtKB-UniRule"/>
</dbReference>
<dbReference type="GO" id="GO:0008270">
    <property type="term" value="F:zinc ion binding"/>
    <property type="evidence" value="ECO:0007669"/>
    <property type="project" value="InterPro"/>
</dbReference>
<dbReference type="GO" id="GO:0051301">
    <property type="term" value="P:cell division"/>
    <property type="evidence" value="ECO:0007669"/>
    <property type="project" value="TreeGrafter"/>
</dbReference>
<dbReference type="GO" id="GO:0051603">
    <property type="term" value="P:proteolysis involved in protein catabolic process"/>
    <property type="evidence" value="ECO:0007669"/>
    <property type="project" value="TreeGrafter"/>
</dbReference>
<dbReference type="CDD" id="cd19497">
    <property type="entry name" value="RecA-like_ClpX"/>
    <property type="match status" value="1"/>
</dbReference>
<dbReference type="FunFam" id="1.10.8.60:FF:000002">
    <property type="entry name" value="ATP-dependent Clp protease ATP-binding subunit ClpX"/>
    <property type="match status" value="1"/>
</dbReference>
<dbReference type="FunFam" id="3.40.50.300:FF:000005">
    <property type="entry name" value="ATP-dependent Clp protease ATP-binding subunit ClpX"/>
    <property type="match status" value="1"/>
</dbReference>
<dbReference type="Gene3D" id="1.10.8.60">
    <property type="match status" value="1"/>
</dbReference>
<dbReference type="Gene3D" id="6.20.220.10">
    <property type="entry name" value="ClpX chaperone, C4-type zinc finger domain"/>
    <property type="match status" value="1"/>
</dbReference>
<dbReference type="Gene3D" id="3.40.50.300">
    <property type="entry name" value="P-loop containing nucleotide triphosphate hydrolases"/>
    <property type="match status" value="1"/>
</dbReference>
<dbReference type="HAMAP" id="MF_00175">
    <property type="entry name" value="ClpX"/>
    <property type="match status" value="1"/>
</dbReference>
<dbReference type="InterPro" id="IPR003593">
    <property type="entry name" value="AAA+_ATPase"/>
</dbReference>
<dbReference type="InterPro" id="IPR050052">
    <property type="entry name" value="ATP-dep_Clp_protease_ClpX"/>
</dbReference>
<dbReference type="InterPro" id="IPR003959">
    <property type="entry name" value="ATPase_AAA_core"/>
</dbReference>
<dbReference type="InterPro" id="IPR019489">
    <property type="entry name" value="Clp_ATPase_C"/>
</dbReference>
<dbReference type="InterPro" id="IPR004487">
    <property type="entry name" value="Clp_protease_ATP-bd_su_ClpX"/>
</dbReference>
<dbReference type="InterPro" id="IPR046425">
    <property type="entry name" value="ClpX_bact"/>
</dbReference>
<dbReference type="InterPro" id="IPR027417">
    <property type="entry name" value="P-loop_NTPase"/>
</dbReference>
<dbReference type="InterPro" id="IPR010603">
    <property type="entry name" value="Znf_CppX_C4"/>
</dbReference>
<dbReference type="InterPro" id="IPR038366">
    <property type="entry name" value="Znf_CppX_C4_sf"/>
</dbReference>
<dbReference type="NCBIfam" id="TIGR00382">
    <property type="entry name" value="clpX"/>
    <property type="match status" value="1"/>
</dbReference>
<dbReference type="NCBIfam" id="NF003745">
    <property type="entry name" value="PRK05342.1"/>
    <property type="match status" value="1"/>
</dbReference>
<dbReference type="PANTHER" id="PTHR48102:SF7">
    <property type="entry name" value="ATP-DEPENDENT CLP PROTEASE ATP-BINDING SUBUNIT CLPX-LIKE, MITOCHONDRIAL"/>
    <property type="match status" value="1"/>
</dbReference>
<dbReference type="PANTHER" id="PTHR48102">
    <property type="entry name" value="ATP-DEPENDENT CLP PROTEASE ATP-BINDING SUBUNIT CLPX-LIKE, MITOCHONDRIAL-RELATED"/>
    <property type="match status" value="1"/>
</dbReference>
<dbReference type="Pfam" id="PF07724">
    <property type="entry name" value="AAA_2"/>
    <property type="match status" value="1"/>
</dbReference>
<dbReference type="Pfam" id="PF10431">
    <property type="entry name" value="ClpB_D2-small"/>
    <property type="match status" value="1"/>
</dbReference>
<dbReference type="Pfam" id="PF06689">
    <property type="entry name" value="zf-C4_ClpX"/>
    <property type="match status" value="1"/>
</dbReference>
<dbReference type="SMART" id="SM00382">
    <property type="entry name" value="AAA"/>
    <property type="match status" value="1"/>
</dbReference>
<dbReference type="SMART" id="SM01086">
    <property type="entry name" value="ClpB_D2-small"/>
    <property type="match status" value="1"/>
</dbReference>
<dbReference type="SMART" id="SM00994">
    <property type="entry name" value="zf-C4_ClpX"/>
    <property type="match status" value="1"/>
</dbReference>
<dbReference type="SUPFAM" id="SSF57716">
    <property type="entry name" value="Glucocorticoid receptor-like (DNA-binding domain)"/>
    <property type="match status" value="1"/>
</dbReference>
<dbReference type="SUPFAM" id="SSF52540">
    <property type="entry name" value="P-loop containing nucleoside triphosphate hydrolases"/>
    <property type="match status" value="1"/>
</dbReference>
<dbReference type="PROSITE" id="PS51902">
    <property type="entry name" value="CLPX_ZB"/>
    <property type="match status" value="1"/>
</dbReference>
<comment type="function">
    <text evidence="1">ATP-dependent specificity component of the Clp protease. It directs the protease to specific substrates. Can perform chaperone functions in the absence of ClpP.</text>
</comment>
<comment type="subunit">
    <text evidence="1">Component of the ClpX-ClpP complex. Forms a hexameric ring that, in the presence of ATP, binds to fourteen ClpP subunits assembled into a disk-like structure with a central cavity, resembling the structure of eukaryotic proteasomes.</text>
</comment>
<comment type="similarity">
    <text evidence="1">Belongs to the ClpX chaperone family.</text>
</comment>
<keyword id="KW-0067">ATP-binding</keyword>
<keyword id="KW-0143">Chaperone</keyword>
<keyword id="KW-0479">Metal-binding</keyword>
<keyword id="KW-0547">Nucleotide-binding</keyword>
<keyword id="KW-0862">Zinc</keyword>
<name>CLPX_LEGPC</name>
<proteinExistence type="inferred from homology"/>